<dbReference type="EC" id="4.98.1.1" evidence="1"/>
<dbReference type="EMBL" id="CP000100">
    <property type="protein sequence ID" value="ABB56169.1"/>
    <property type="molecule type" value="Genomic_DNA"/>
</dbReference>
<dbReference type="RefSeq" id="WP_011243680.1">
    <property type="nucleotide sequence ID" value="NZ_JACJTX010000002.1"/>
</dbReference>
<dbReference type="SMR" id="Q31S00"/>
<dbReference type="STRING" id="1140.Synpcc7942_0137"/>
<dbReference type="PaxDb" id="1140-Synpcc7942_0137"/>
<dbReference type="GeneID" id="72428949"/>
<dbReference type="KEGG" id="syf:Synpcc7942_0137"/>
<dbReference type="eggNOG" id="COG0276">
    <property type="taxonomic scope" value="Bacteria"/>
</dbReference>
<dbReference type="HOGENOM" id="CLU_018884_4_1_3"/>
<dbReference type="OrthoDB" id="9809741at2"/>
<dbReference type="BioCyc" id="SYNEL:SYNPCC7942_0137-MONOMER"/>
<dbReference type="UniPathway" id="UPA00252">
    <property type="reaction ID" value="UER00325"/>
</dbReference>
<dbReference type="Proteomes" id="UP000889800">
    <property type="component" value="Chromosome"/>
</dbReference>
<dbReference type="GO" id="GO:0005737">
    <property type="term" value="C:cytoplasm"/>
    <property type="evidence" value="ECO:0007669"/>
    <property type="project" value="UniProtKB-SubCell"/>
</dbReference>
<dbReference type="GO" id="GO:0004325">
    <property type="term" value="F:ferrochelatase activity"/>
    <property type="evidence" value="ECO:0007669"/>
    <property type="project" value="UniProtKB-UniRule"/>
</dbReference>
<dbReference type="GO" id="GO:0046872">
    <property type="term" value="F:metal ion binding"/>
    <property type="evidence" value="ECO:0007669"/>
    <property type="project" value="UniProtKB-KW"/>
</dbReference>
<dbReference type="GO" id="GO:0006783">
    <property type="term" value="P:heme biosynthetic process"/>
    <property type="evidence" value="ECO:0007669"/>
    <property type="project" value="UniProtKB-UniRule"/>
</dbReference>
<dbReference type="CDD" id="cd00419">
    <property type="entry name" value="Ferrochelatase_C"/>
    <property type="match status" value="1"/>
</dbReference>
<dbReference type="CDD" id="cd03411">
    <property type="entry name" value="Ferrochelatase_N"/>
    <property type="match status" value="1"/>
</dbReference>
<dbReference type="FunFam" id="3.40.50.1400:FF:000006">
    <property type="entry name" value="Ferrochelatase"/>
    <property type="match status" value="1"/>
</dbReference>
<dbReference type="Gene3D" id="3.40.50.1400">
    <property type="match status" value="2"/>
</dbReference>
<dbReference type="HAMAP" id="MF_00323">
    <property type="entry name" value="Ferrochelatase"/>
    <property type="match status" value="1"/>
</dbReference>
<dbReference type="InterPro" id="IPR001015">
    <property type="entry name" value="Ferrochelatase"/>
</dbReference>
<dbReference type="InterPro" id="IPR019772">
    <property type="entry name" value="Ferrochelatase_AS"/>
</dbReference>
<dbReference type="InterPro" id="IPR033644">
    <property type="entry name" value="Ferrochelatase_C"/>
</dbReference>
<dbReference type="InterPro" id="IPR033659">
    <property type="entry name" value="Ferrochelatase_N"/>
</dbReference>
<dbReference type="NCBIfam" id="TIGR00109">
    <property type="entry name" value="hemH"/>
    <property type="match status" value="1"/>
</dbReference>
<dbReference type="PANTHER" id="PTHR11108">
    <property type="entry name" value="FERROCHELATASE"/>
    <property type="match status" value="1"/>
</dbReference>
<dbReference type="PANTHER" id="PTHR11108:SF1">
    <property type="entry name" value="FERROCHELATASE, MITOCHONDRIAL"/>
    <property type="match status" value="1"/>
</dbReference>
<dbReference type="Pfam" id="PF00762">
    <property type="entry name" value="Ferrochelatase"/>
    <property type="match status" value="1"/>
</dbReference>
<dbReference type="SUPFAM" id="SSF53800">
    <property type="entry name" value="Chelatase"/>
    <property type="match status" value="1"/>
</dbReference>
<dbReference type="SUPFAM" id="SSF103511">
    <property type="entry name" value="Chlorophyll a-b binding protein"/>
    <property type="match status" value="1"/>
</dbReference>
<dbReference type="PROSITE" id="PS00534">
    <property type="entry name" value="FERROCHELATASE"/>
    <property type="match status" value="1"/>
</dbReference>
<organism>
    <name type="scientific">Synechococcus elongatus (strain ATCC 33912 / PCC 7942 / FACHB-805)</name>
    <name type="common">Anacystis nidulans R2</name>
    <dbReference type="NCBI Taxonomy" id="1140"/>
    <lineage>
        <taxon>Bacteria</taxon>
        <taxon>Bacillati</taxon>
        <taxon>Cyanobacteriota</taxon>
        <taxon>Cyanophyceae</taxon>
        <taxon>Synechococcales</taxon>
        <taxon>Synechococcaceae</taxon>
        <taxon>Synechococcus</taxon>
    </lineage>
</organism>
<accession>Q31S00</accession>
<comment type="function">
    <text evidence="1">Catalyzes the ferrous insertion into protoporphyrin IX.</text>
</comment>
<comment type="catalytic activity">
    <reaction evidence="1">
        <text>heme b + 2 H(+) = protoporphyrin IX + Fe(2+)</text>
        <dbReference type="Rhea" id="RHEA:22584"/>
        <dbReference type="ChEBI" id="CHEBI:15378"/>
        <dbReference type="ChEBI" id="CHEBI:29033"/>
        <dbReference type="ChEBI" id="CHEBI:57306"/>
        <dbReference type="ChEBI" id="CHEBI:60344"/>
        <dbReference type="EC" id="4.98.1.1"/>
    </reaction>
</comment>
<comment type="pathway">
    <text evidence="1">Porphyrin-containing compound metabolism; protoheme biosynthesis; protoheme from protoporphyrin-IX: step 1/1.</text>
</comment>
<comment type="subcellular location">
    <subcellularLocation>
        <location evidence="1">Cytoplasm</location>
    </subcellularLocation>
</comment>
<comment type="similarity">
    <text evidence="1">Belongs to the ferrochelatase family.</text>
</comment>
<gene>
    <name evidence="1" type="primary">hemH</name>
    <name type="ordered locus">Synpcc7942_0137</name>
</gene>
<feature type="chain" id="PRO_1000019377" description="Ferrochelatase">
    <location>
        <begin position="1"/>
        <end position="387"/>
    </location>
</feature>
<feature type="binding site" evidence="1">
    <location>
        <position position="196"/>
    </location>
    <ligand>
        <name>Fe cation</name>
        <dbReference type="ChEBI" id="CHEBI:24875"/>
    </ligand>
</feature>
<feature type="binding site" evidence="1">
    <location>
        <position position="277"/>
    </location>
    <ligand>
        <name>Fe cation</name>
        <dbReference type="ChEBI" id="CHEBI:24875"/>
    </ligand>
</feature>
<sequence>MGRVGVLLLNLGGPERLEDVGPFLYNLFADPEIIRLPFPWLQKPLAWLISSLRTRKSQENYKQIGGGSPLRRITEEQATALRQSLSDRGQAAQVYIGMRYWHPFTEEAIAQIKADGIDRLVILPLYPQFSISTSGSSFRLLQRLRDRDPEFQKIDCSVVPSWYERSGYLQAMAELIAQELDKLEQPEQGHVFFSAHGVPVSYVEEAGDPYQREIEDCTRKIMETLGRSNPWTLAYQSRVGPVEWLQPYTEDALEELAERGVKDLVVVPISFVSEHIETLEEIDIEYREIAEEAGIERFLRVPALNTHPLFIQDLSDLVEQTLEQPRFRLEDVTLLPKKVKLYPQERWEWGITLNAEVWNGRIAMLGFLALLVELLTGRGPLHALGLL</sequence>
<proteinExistence type="inferred from homology"/>
<name>HEMH_SYNE7</name>
<protein>
    <recommendedName>
        <fullName evidence="1">Ferrochelatase</fullName>
        <ecNumber evidence="1">4.98.1.1</ecNumber>
    </recommendedName>
    <alternativeName>
        <fullName evidence="1">Heme synthase</fullName>
    </alternativeName>
    <alternativeName>
        <fullName evidence="1">Protoheme ferro-lyase</fullName>
    </alternativeName>
</protein>
<evidence type="ECO:0000255" key="1">
    <source>
        <dbReference type="HAMAP-Rule" id="MF_00323"/>
    </source>
</evidence>
<keyword id="KW-0963">Cytoplasm</keyword>
<keyword id="KW-0350">Heme biosynthesis</keyword>
<keyword id="KW-0408">Iron</keyword>
<keyword id="KW-0456">Lyase</keyword>
<keyword id="KW-0479">Metal-binding</keyword>
<keyword id="KW-0627">Porphyrin biosynthesis</keyword>
<keyword id="KW-1185">Reference proteome</keyword>
<reference key="1">
    <citation type="submission" date="2005-08" db="EMBL/GenBank/DDBJ databases">
        <title>Complete sequence of chromosome 1 of Synechococcus elongatus PCC 7942.</title>
        <authorList>
            <consortium name="US DOE Joint Genome Institute"/>
            <person name="Copeland A."/>
            <person name="Lucas S."/>
            <person name="Lapidus A."/>
            <person name="Barry K."/>
            <person name="Detter J.C."/>
            <person name="Glavina T."/>
            <person name="Hammon N."/>
            <person name="Israni S."/>
            <person name="Pitluck S."/>
            <person name="Schmutz J."/>
            <person name="Larimer F."/>
            <person name="Land M."/>
            <person name="Kyrpides N."/>
            <person name="Lykidis A."/>
            <person name="Golden S."/>
            <person name="Richardson P."/>
        </authorList>
    </citation>
    <scope>NUCLEOTIDE SEQUENCE [LARGE SCALE GENOMIC DNA]</scope>
    <source>
        <strain>ATCC 33912 / PCC 7942 / FACHB-805</strain>
    </source>
</reference>